<dbReference type="EMBL" id="EU595664">
    <property type="protein sequence ID" value="ACC60344.1"/>
    <property type="molecule type" value="mRNA"/>
</dbReference>
<dbReference type="EMBL" id="EU955861">
    <property type="protein sequence ID" value="ACG27979.1"/>
    <property type="molecule type" value="mRNA"/>
</dbReference>
<dbReference type="EMBL" id="BT043360">
    <property type="protein sequence ID" value="ACF88365.1"/>
    <property type="molecule type" value="mRNA"/>
</dbReference>
<dbReference type="RefSeq" id="NP_001123589.1">
    <property type="nucleotide sequence ID" value="NM_001130117.1"/>
</dbReference>
<dbReference type="SMR" id="B2LXS7"/>
<dbReference type="FunCoup" id="B2LXS7">
    <property type="interactions" value="738"/>
</dbReference>
<dbReference type="STRING" id="4577.B2LXS7"/>
<dbReference type="PaxDb" id="4577-GRMZM2G155662_P01"/>
<dbReference type="EnsemblPlants" id="Zm00001eb270470_T002">
    <property type="protein sequence ID" value="Zm00001eb270470_P002"/>
    <property type="gene ID" value="Zm00001eb270470"/>
</dbReference>
<dbReference type="GeneID" id="100170235"/>
<dbReference type="Gramene" id="Zm00001eb270470_T002">
    <property type="protein sequence ID" value="Zm00001eb270470_P002"/>
    <property type="gene ID" value="Zm00001eb270470"/>
</dbReference>
<dbReference type="KEGG" id="zma:100170235"/>
<dbReference type="MaizeGDB" id="1233241"/>
<dbReference type="eggNOG" id="ENOG502QRRY">
    <property type="taxonomic scope" value="Eukaryota"/>
</dbReference>
<dbReference type="HOGENOM" id="CLU_062935_1_0_1"/>
<dbReference type="InParanoid" id="B2LXS7"/>
<dbReference type="OrthoDB" id="511009at2759"/>
<dbReference type="Proteomes" id="UP000007305">
    <property type="component" value="Chromosome 6"/>
</dbReference>
<dbReference type="ExpressionAtlas" id="B2LXS7">
    <property type="expression patterns" value="baseline and differential"/>
</dbReference>
<dbReference type="GO" id="GO:0009570">
    <property type="term" value="C:chloroplast stroma"/>
    <property type="evidence" value="ECO:0000314"/>
    <property type="project" value="UniProtKB"/>
</dbReference>
<dbReference type="GO" id="GO:0005634">
    <property type="term" value="C:nucleus"/>
    <property type="evidence" value="ECO:0007669"/>
    <property type="project" value="UniProtKB-SubCell"/>
</dbReference>
<dbReference type="GO" id="GO:0003677">
    <property type="term" value="F:DNA binding"/>
    <property type="evidence" value="ECO:0000314"/>
    <property type="project" value="UniProtKB"/>
</dbReference>
<dbReference type="GO" id="GO:0003723">
    <property type="term" value="F:RNA binding"/>
    <property type="evidence" value="ECO:0000314"/>
    <property type="project" value="UniProtKB"/>
</dbReference>
<dbReference type="GO" id="GO:0003697">
    <property type="term" value="F:single-stranded DNA binding"/>
    <property type="evidence" value="ECO:0007669"/>
    <property type="project" value="InterPro"/>
</dbReference>
<dbReference type="GO" id="GO:0006952">
    <property type="term" value="P:defense response"/>
    <property type="evidence" value="ECO:0007669"/>
    <property type="project" value="InterPro"/>
</dbReference>
<dbReference type="GO" id="GO:0006281">
    <property type="term" value="P:DNA repair"/>
    <property type="evidence" value="ECO:0007669"/>
    <property type="project" value="UniProtKB-KW"/>
</dbReference>
<dbReference type="GO" id="GO:0045910">
    <property type="term" value="P:negative regulation of DNA recombination"/>
    <property type="evidence" value="ECO:0000315"/>
    <property type="project" value="UniProtKB"/>
</dbReference>
<dbReference type="GO" id="GO:0006355">
    <property type="term" value="P:regulation of DNA-templated transcription"/>
    <property type="evidence" value="ECO:0007669"/>
    <property type="project" value="InterPro"/>
</dbReference>
<dbReference type="FunFam" id="2.30.31.10:FF:000002">
    <property type="entry name" value="Single-stranded DNA-binding protein WHY2, mitochondrial"/>
    <property type="match status" value="1"/>
</dbReference>
<dbReference type="Gene3D" id="2.30.31.10">
    <property type="entry name" value="Transcriptional Coactivator Pc4, Chain A"/>
    <property type="match status" value="1"/>
</dbReference>
<dbReference type="InterPro" id="IPR009044">
    <property type="entry name" value="ssDNA-bd_transcriptional_reg"/>
</dbReference>
<dbReference type="InterPro" id="IPR013742">
    <property type="entry name" value="Whirly"/>
</dbReference>
<dbReference type="PANTHER" id="PTHR31745:SF2">
    <property type="entry name" value="SINGLE-STRANDED DNA-BINDING PROTEIN WHY1, CHLOROPLASTIC"/>
    <property type="match status" value="1"/>
</dbReference>
<dbReference type="PANTHER" id="PTHR31745">
    <property type="entry name" value="SINGLE-STRANDED DNA-BINDING PROTEIN WHY2, MITOCHONDRIAL"/>
    <property type="match status" value="1"/>
</dbReference>
<dbReference type="Pfam" id="PF08536">
    <property type="entry name" value="Whirly"/>
    <property type="match status" value="1"/>
</dbReference>
<dbReference type="SUPFAM" id="SSF54447">
    <property type="entry name" value="ssDNA-binding transcriptional regulator domain"/>
    <property type="match status" value="1"/>
</dbReference>
<organism>
    <name type="scientific">Zea mays</name>
    <name type="common">Maize</name>
    <dbReference type="NCBI Taxonomy" id="4577"/>
    <lineage>
        <taxon>Eukaryota</taxon>
        <taxon>Viridiplantae</taxon>
        <taxon>Streptophyta</taxon>
        <taxon>Embryophyta</taxon>
        <taxon>Tracheophyta</taxon>
        <taxon>Spermatophyta</taxon>
        <taxon>Magnoliopsida</taxon>
        <taxon>Liliopsida</taxon>
        <taxon>Poales</taxon>
        <taxon>Poaceae</taxon>
        <taxon>PACMAD clade</taxon>
        <taxon>Panicoideae</taxon>
        <taxon>Andropogonodae</taxon>
        <taxon>Andropogoneae</taxon>
        <taxon>Tripsacinae</taxon>
        <taxon>Zea</taxon>
    </lineage>
</organism>
<feature type="transit peptide" description="Chloroplast" evidence="3">
    <location>
        <begin position="1"/>
        <end position="37"/>
    </location>
</feature>
<feature type="chain" id="PRO_0000420452" description="Single-stranded DNA-binding protein WHY1, chloroplastic">
    <location>
        <begin position="38"/>
        <end position="266"/>
    </location>
</feature>
<feature type="region of interest" description="Disordered" evidence="4">
    <location>
        <begin position="53"/>
        <end position="81"/>
    </location>
</feature>
<feature type="region of interest" description="Required for ssDNA binding" evidence="1">
    <location>
        <begin position="94"/>
        <end position="99"/>
    </location>
</feature>
<feature type="short sequence motif" description="Nuclear localization signal" evidence="3">
    <location>
        <begin position="172"/>
        <end position="185"/>
    </location>
</feature>
<sequence length="266" mass="29439">MPPPAPLFLSLASTPPPALMPVHHPRAPQSLTLVPPVASSRKAAAVPACPVASPRHSDYFDPRAPPPPRGDGGYGRPPNGAQDGRVFTSYSIYKGKAALSFDPRPPLFVPLDSGAYKVAKEGFVLLQFAPAVATRQYDWTRKQVFSLSVWEIGTLLTLGPTDSCEFFHDPFKGRSEEGKVRKVLKIEPTPDGNGRFFNLSVQNRLINVDESIYIPITKGEFAVIVSTFNYIIPHLMGWSTFVSSIKPEESRPYSRPQSTSEYEWRR</sequence>
<comment type="function">
    <text evidence="5 6">Single-stranded DNA and RNA binding protein that maintains plastid genome stability by preventing break-induced and short homology-dependent illegitimate recombinations. Functions in RNA metabolism and is involved in the maturation of the atpF and 23S ribosomal RNAs.</text>
</comment>
<comment type="subunit">
    <text evidence="1">Homotetramer.</text>
</comment>
<comment type="subcellular location">
    <subcellularLocation>
        <location evidence="5">Plastid</location>
        <location evidence="5">Chloroplast stroma</location>
    </subcellularLocation>
    <subcellularLocation>
        <location evidence="2">Nucleus</location>
    </subcellularLocation>
    <text evidence="2">Can localize to both chloroplast and nucleus.</text>
</comment>
<comment type="disruption phenotype">
    <text evidence="5 6">Albino seedlings lacking plastid ribosomes.</text>
</comment>
<comment type="similarity">
    <text evidence="7">Belongs to the Whirly family.</text>
</comment>
<name>WHY1_MAIZE</name>
<protein>
    <recommendedName>
        <fullName>Single-stranded DNA-binding protein WHY1, chloroplastic</fullName>
    </recommendedName>
    <alternativeName>
        <fullName>Protein WHIRLY 1</fullName>
        <shortName>ZmWHY1</shortName>
    </alternativeName>
</protein>
<evidence type="ECO:0000250" key="1"/>
<evidence type="ECO:0000250" key="2">
    <source>
        <dbReference type="UniProtKB" id="Q9M9S3"/>
    </source>
</evidence>
<evidence type="ECO:0000255" key="3"/>
<evidence type="ECO:0000256" key="4">
    <source>
        <dbReference type="SAM" id="MobiDB-lite"/>
    </source>
</evidence>
<evidence type="ECO:0000269" key="5">
    <source>
    </source>
</evidence>
<evidence type="ECO:0000269" key="6">
    <source>
    </source>
</evidence>
<evidence type="ECO:0000305" key="7"/>
<reference key="1">
    <citation type="journal article" date="2008" name="Nucleic Acids Res.">
        <title>A member of the Whirly family is a multifunctional RNA- and DNA-binding protein that is essential for chloroplast biogenesis.</title>
        <authorList>
            <person name="Prikryl J."/>
            <person name="Watkins K.P."/>
            <person name="Friso G."/>
            <person name="van Wijk K.J."/>
            <person name="Barkan A."/>
        </authorList>
    </citation>
    <scope>NUCLEOTIDE SEQUENCE [MRNA]</scope>
    <scope>FUNCTION</scope>
    <scope>SUBCELLULAR LOCATION</scope>
    <scope>DISRUPTION PHENOTYPE</scope>
    <source>
        <strain>cv. B73</strain>
    </source>
</reference>
<reference key="2">
    <citation type="journal article" date="2009" name="Plant Mol. Biol.">
        <title>Insights into corn genes derived from large-scale cDNA sequencing.</title>
        <authorList>
            <person name="Alexandrov N.N."/>
            <person name="Brover V.V."/>
            <person name="Freidin S."/>
            <person name="Troukhan M.E."/>
            <person name="Tatarinova T.V."/>
            <person name="Zhang H."/>
            <person name="Swaller T.J."/>
            <person name="Lu Y.-P."/>
            <person name="Bouck J."/>
            <person name="Flavell R.B."/>
            <person name="Feldmann K.A."/>
        </authorList>
    </citation>
    <scope>NUCLEOTIDE SEQUENCE [LARGE SCALE MRNA]</scope>
</reference>
<reference key="3">
    <citation type="journal article" date="2009" name="PLoS Genet.">
        <title>Sequencing, mapping, and analysis of 27,455 maize full-length cDNAs.</title>
        <authorList>
            <person name="Soderlund C."/>
            <person name="Descour A."/>
            <person name="Kudrna D."/>
            <person name="Bomhoff M."/>
            <person name="Boyd L."/>
            <person name="Currie J."/>
            <person name="Angelova A."/>
            <person name="Collura K."/>
            <person name="Wissotski M."/>
            <person name="Ashley E."/>
            <person name="Morrow D."/>
            <person name="Fernandes J."/>
            <person name="Walbot V."/>
            <person name="Yu Y."/>
        </authorList>
    </citation>
    <scope>NUCLEOTIDE SEQUENCE [LARGE SCALE MRNA]</scope>
    <source>
        <strain>cv. B73</strain>
    </source>
</reference>
<reference key="4">
    <citation type="journal article" date="2005" name="Trends Plant Sci.">
        <title>Whirly transcription factors: defense gene regulation and beyond.</title>
        <authorList>
            <person name="Desveaux D."/>
            <person name="Marechal A."/>
            <person name="Brisson N."/>
        </authorList>
    </citation>
    <scope>GENE FAMILY</scope>
</reference>
<reference key="5">
    <citation type="journal article" date="2009" name="Proc. Natl. Acad. Sci. U.S.A.">
        <title>Whirly proteins maintain plastid genome stability in Arabidopsis.</title>
        <authorList>
            <person name="Marechal A."/>
            <person name="Parent J.S."/>
            <person name="Veronneau-Lafortune F."/>
            <person name="Joyeux A."/>
            <person name="Lang B.F."/>
            <person name="Brisson N."/>
        </authorList>
    </citation>
    <scope>FUNCTION</scope>
    <scope>DISRUPTION PHENOTYPE</scope>
</reference>
<accession>B2LXS7</accession>
<proteinExistence type="evidence at transcript level"/>
<gene>
    <name type="primary">WHY1</name>
</gene>
<keyword id="KW-0150">Chloroplast</keyword>
<keyword id="KW-0227">DNA damage</keyword>
<keyword id="KW-0234">DNA repair</keyword>
<keyword id="KW-0238">DNA-binding</keyword>
<keyword id="KW-0539">Nucleus</keyword>
<keyword id="KW-0934">Plastid</keyword>
<keyword id="KW-1185">Reference proteome</keyword>
<keyword id="KW-0694">RNA-binding</keyword>
<keyword id="KW-0809">Transit peptide</keyword>